<sequence length="149" mass="16689">MQIILLNDVDHLGEKGEVHEVADGYGRNYLIPQGLARVATDGAIRQLRDEQQQQARKEAAKKEQVEELKDELEDMQVVFTAKVGEDNRIFGTVTTQQIAVELSNRGFNIDRRDIELDEDIRFVGAYTASIDLGYGIEATLDIQVIPESG</sequence>
<keyword id="KW-1185">Reference proteome</keyword>
<keyword id="KW-0687">Ribonucleoprotein</keyword>
<keyword id="KW-0689">Ribosomal protein</keyword>
<keyword id="KW-0694">RNA-binding</keyword>
<keyword id="KW-0699">rRNA-binding</keyword>
<name>RL9_SALRD</name>
<proteinExistence type="inferred from homology"/>
<reference key="1">
    <citation type="journal article" date="2005" name="Proc. Natl. Acad. Sci. U.S.A.">
        <title>The genome of Salinibacter ruber: convergence and gene exchange among hyperhalophilic bacteria and archaea.</title>
        <authorList>
            <person name="Mongodin E.F."/>
            <person name="Nelson K.E."/>
            <person name="Daugherty S."/>
            <person name="DeBoy R.T."/>
            <person name="Wister J."/>
            <person name="Khouri H."/>
            <person name="Weidman J."/>
            <person name="Walsh D.A."/>
            <person name="Papke R.T."/>
            <person name="Sanchez Perez G."/>
            <person name="Sharma A.K."/>
            <person name="Nesbo C.L."/>
            <person name="MacLeod D."/>
            <person name="Bapteste E."/>
            <person name="Doolittle W.F."/>
            <person name="Charlebois R.L."/>
            <person name="Legault B."/>
            <person name="Rodriguez-Valera F."/>
        </authorList>
    </citation>
    <scope>NUCLEOTIDE SEQUENCE [LARGE SCALE GENOMIC DNA]</scope>
    <source>
        <strain>DSM 13855 / CECT 5946 / M31</strain>
    </source>
</reference>
<dbReference type="EMBL" id="CP000159">
    <property type="protein sequence ID" value="ABC45579.1"/>
    <property type="molecule type" value="Genomic_DNA"/>
</dbReference>
<dbReference type="RefSeq" id="WP_011404119.1">
    <property type="nucleotide sequence ID" value="NC_007677.1"/>
</dbReference>
<dbReference type="RefSeq" id="YP_445491.1">
    <property type="nucleotide sequence ID" value="NC_007677.1"/>
</dbReference>
<dbReference type="SMR" id="Q2S2U0"/>
<dbReference type="STRING" id="309807.SRU_1367"/>
<dbReference type="EnsemblBacteria" id="ABC45579">
    <property type="protein sequence ID" value="ABC45579"/>
    <property type="gene ID" value="SRU_1367"/>
</dbReference>
<dbReference type="GeneID" id="83728280"/>
<dbReference type="KEGG" id="sru:SRU_1367"/>
<dbReference type="PATRIC" id="fig|309807.25.peg.1421"/>
<dbReference type="eggNOG" id="COG0359">
    <property type="taxonomic scope" value="Bacteria"/>
</dbReference>
<dbReference type="HOGENOM" id="CLU_078938_3_0_10"/>
<dbReference type="OrthoDB" id="9788336at2"/>
<dbReference type="Proteomes" id="UP000008674">
    <property type="component" value="Chromosome"/>
</dbReference>
<dbReference type="GO" id="GO:1990904">
    <property type="term" value="C:ribonucleoprotein complex"/>
    <property type="evidence" value="ECO:0007669"/>
    <property type="project" value="UniProtKB-KW"/>
</dbReference>
<dbReference type="GO" id="GO:0005840">
    <property type="term" value="C:ribosome"/>
    <property type="evidence" value="ECO:0007669"/>
    <property type="project" value="UniProtKB-KW"/>
</dbReference>
<dbReference type="GO" id="GO:0019843">
    <property type="term" value="F:rRNA binding"/>
    <property type="evidence" value="ECO:0007669"/>
    <property type="project" value="UniProtKB-UniRule"/>
</dbReference>
<dbReference type="GO" id="GO:0003735">
    <property type="term" value="F:structural constituent of ribosome"/>
    <property type="evidence" value="ECO:0007669"/>
    <property type="project" value="InterPro"/>
</dbReference>
<dbReference type="GO" id="GO:0006412">
    <property type="term" value="P:translation"/>
    <property type="evidence" value="ECO:0007669"/>
    <property type="project" value="UniProtKB-UniRule"/>
</dbReference>
<dbReference type="Gene3D" id="3.10.430.100">
    <property type="entry name" value="Ribosomal protein L9, C-terminal domain"/>
    <property type="match status" value="1"/>
</dbReference>
<dbReference type="Gene3D" id="3.40.5.10">
    <property type="entry name" value="Ribosomal protein L9, N-terminal domain"/>
    <property type="match status" value="1"/>
</dbReference>
<dbReference type="HAMAP" id="MF_00503">
    <property type="entry name" value="Ribosomal_bL9"/>
    <property type="match status" value="1"/>
</dbReference>
<dbReference type="InterPro" id="IPR000244">
    <property type="entry name" value="Ribosomal_bL9"/>
</dbReference>
<dbReference type="InterPro" id="IPR009027">
    <property type="entry name" value="Ribosomal_bL9/RNase_H1_N"/>
</dbReference>
<dbReference type="InterPro" id="IPR020594">
    <property type="entry name" value="Ribosomal_bL9_bac/chp"/>
</dbReference>
<dbReference type="InterPro" id="IPR020069">
    <property type="entry name" value="Ribosomal_bL9_C"/>
</dbReference>
<dbReference type="InterPro" id="IPR036791">
    <property type="entry name" value="Ribosomal_bL9_C_sf"/>
</dbReference>
<dbReference type="InterPro" id="IPR020070">
    <property type="entry name" value="Ribosomal_bL9_N"/>
</dbReference>
<dbReference type="InterPro" id="IPR036935">
    <property type="entry name" value="Ribosomal_bL9_N_sf"/>
</dbReference>
<dbReference type="NCBIfam" id="TIGR00158">
    <property type="entry name" value="L9"/>
    <property type="match status" value="1"/>
</dbReference>
<dbReference type="PANTHER" id="PTHR21368">
    <property type="entry name" value="50S RIBOSOMAL PROTEIN L9"/>
    <property type="match status" value="1"/>
</dbReference>
<dbReference type="Pfam" id="PF03948">
    <property type="entry name" value="Ribosomal_L9_C"/>
    <property type="match status" value="1"/>
</dbReference>
<dbReference type="Pfam" id="PF01281">
    <property type="entry name" value="Ribosomal_L9_N"/>
    <property type="match status" value="1"/>
</dbReference>
<dbReference type="SUPFAM" id="SSF55658">
    <property type="entry name" value="L9 N-domain-like"/>
    <property type="match status" value="1"/>
</dbReference>
<dbReference type="SUPFAM" id="SSF55653">
    <property type="entry name" value="Ribosomal protein L9 C-domain"/>
    <property type="match status" value="1"/>
</dbReference>
<dbReference type="PROSITE" id="PS00651">
    <property type="entry name" value="RIBOSOMAL_L9"/>
    <property type="match status" value="1"/>
</dbReference>
<accession>Q2S2U0</accession>
<comment type="function">
    <text evidence="1">Binds to the 23S rRNA.</text>
</comment>
<comment type="similarity">
    <text evidence="1">Belongs to the bacterial ribosomal protein bL9 family.</text>
</comment>
<protein>
    <recommendedName>
        <fullName evidence="1">Large ribosomal subunit protein bL9</fullName>
    </recommendedName>
    <alternativeName>
        <fullName evidence="2">50S ribosomal protein L9</fullName>
    </alternativeName>
</protein>
<gene>
    <name evidence="1" type="primary">rplI</name>
    <name type="ordered locus">SRU_1367</name>
</gene>
<evidence type="ECO:0000255" key="1">
    <source>
        <dbReference type="HAMAP-Rule" id="MF_00503"/>
    </source>
</evidence>
<evidence type="ECO:0000305" key="2"/>
<organism>
    <name type="scientific">Salinibacter ruber (strain DSM 13855 / M31)</name>
    <dbReference type="NCBI Taxonomy" id="309807"/>
    <lineage>
        <taxon>Bacteria</taxon>
        <taxon>Pseudomonadati</taxon>
        <taxon>Rhodothermota</taxon>
        <taxon>Rhodothermia</taxon>
        <taxon>Rhodothermales</taxon>
        <taxon>Salinibacteraceae</taxon>
        <taxon>Salinibacter</taxon>
    </lineage>
</organism>
<feature type="chain" id="PRO_0000236581" description="Large ribosomal subunit protein bL9">
    <location>
        <begin position="1"/>
        <end position="149"/>
    </location>
</feature>